<feature type="chain" id="PRO_0000254281" description="ATP synthase subunit beta">
    <location>
        <begin position="1"/>
        <end position="467"/>
    </location>
</feature>
<feature type="binding site" evidence="1">
    <location>
        <begin position="153"/>
        <end position="160"/>
    </location>
    <ligand>
        <name>ATP</name>
        <dbReference type="ChEBI" id="CHEBI:30616"/>
    </ligand>
</feature>
<name>ATPB_LACPL</name>
<evidence type="ECO:0000255" key="1">
    <source>
        <dbReference type="HAMAP-Rule" id="MF_01347"/>
    </source>
</evidence>
<accession>Q88UU3</accession>
<accession>F9UQR3</accession>
<reference key="1">
    <citation type="journal article" date="2003" name="Proc. Natl. Acad. Sci. U.S.A.">
        <title>Complete genome sequence of Lactobacillus plantarum WCFS1.</title>
        <authorList>
            <person name="Kleerebezem M."/>
            <person name="Boekhorst J."/>
            <person name="van Kranenburg R."/>
            <person name="Molenaar D."/>
            <person name="Kuipers O.P."/>
            <person name="Leer R."/>
            <person name="Tarchini R."/>
            <person name="Peters S.A."/>
            <person name="Sandbrink H.M."/>
            <person name="Fiers M.W.E.J."/>
            <person name="Stiekema W."/>
            <person name="Klein Lankhorst R.M."/>
            <person name="Bron P.A."/>
            <person name="Hoffer S.M."/>
            <person name="Nierop Groot M.N."/>
            <person name="Kerkhoven R."/>
            <person name="De Vries M."/>
            <person name="Ursing B."/>
            <person name="De Vos W.M."/>
            <person name="Siezen R.J."/>
        </authorList>
    </citation>
    <scope>NUCLEOTIDE SEQUENCE [LARGE SCALE GENOMIC DNA]</scope>
    <source>
        <strain>ATCC BAA-793 / NCIMB 8826 / WCFS1</strain>
    </source>
</reference>
<reference key="2">
    <citation type="journal article" date="2012" name="J. Bacteriol.">
        <title>Complete resequencing and reannotation of the Lactobacillus plantarum WCFS1 genome.</title>
        <authorList>
            <person name="Siezen R.J."/>
            <person name="Francke C."/>
            <person name="Renckens B."/>
            <person name="Boekhorst J."/>
            <person name="Wels M."/>
            <person name="Kleerebezem M."/>
            <person name="van Hijum S.A."/>
        </authorList>
    </citation>
    <scope>NUCLEOTIDE SEQUENCE [LARGE SCALE GENOMIC DNA]</scope>
    <scope>GENOME REANNOTATION</scope>
    <source>
        <strain>ATCC BAA-793 / NCIMB 8826 / WCFS1</strain>
    </source>
</reference>
<gene>
    <name evidence="1" type="primary">atpD</name>
    <name type="ordered locus">lp_2364</name>
</gene>
<protein>
    <recommendedName>
        <fullName evidence="1">ATP synthase subunit beta</fullName>
        <ecNumber evidence="1">7.1.2.2</ecNumber>
    </recommendedName>
    <alternativeName>
        <fullName evidence="1">ATP synthase F1 sector subunit beta</fullName>
    </alternativeName>
    <alternativeName>
        <fullName evidence="1">F-ATPase subunit beta</fullName>
    </alternativeName>
</protein>
<keyword id="KW-0066">ATP synthesis</keyword>
<keyword id="KW-0067">ATP-binding</keyword>
<keyword id="KW-1003">Cell membrane</keyword>
<keyword id="KW-0139">CF(1)</keyword>
<keyword id="KW-0375">Hydrogen ion transport</keyword>
<keyword id="KW-0406">Ion transport</keyword>
<keyword id="KW-0472">Membrane</keyword>
<keyword id="KW-0547">Nucleotide-binding</keyword>
<keyword id="KW-1185">Reference proteome</keyword>
<keyword id="KW-1278">Translocase</keyword>
<keyword id="KW-0813">Transport</keyword>
<dbReference type="EC" id="7.1.2.2" evidence="1"/>
<dbReference type="EMBL" id="AL935263">
    <property type="protein sequence ID" value="CCC79552.1"/>
    <property type="molecule type" value="Genomic_DNA"/>
</dbReference>
<dbReference type="RefSeq" id="WP_003641443.1">
    <property type="nucleotide sequence ID" value="NC_004567.2"/>
</dbReference>
<dbReference type="RefSeq" id="YP_004890066.1">
    <property type="nucleotide sequence ID" value="NC_004567.2"/>
</dbReference>
<dbReference type="SMR" id="Q88UU3"/>
<dbReference type="STRING" id="220668.lp_2364"/>
<dbReference type="EnsemblBacteria" id="CCC79552">
    <property type="protein sequence ID" value="CCC79552"/>
    <property type="gene ID" value="lp_2364"/>
</dbReference>
<dbReference type="GeneID" id="89669621"/>
<dbReference type="KEGG" id="lpl:lp_2364"/>
<dbReference type="PATRIC" id="fig|220668.9.peg.1997"/>
<dbReference type="eggNOG" id="COG0055">
    <property type="taxonomic scope" value="Bacteria"/>
</dbReference>
<dbReference type="HOGENOM" id="CLU_022398_0_2_9"/>
<dbReference type="OrthoDB" id="9801639at2"/>
<dbReference type="PhylomeDB" id="Q88UU3"/>
<dbReference type="Proteomes" id="UP000000432">
    <property type="component" value="Chromosome"/>
</dbReference>
<dbReference type="GO" id="GO:0005886">
    <property type="term" value="C:plasma membrane"/>
    <property type="evidence" value="ECO:0007669"/>
    <property type="project" value="UniProtKB-SubCell"/>
</dbReference>
<dbReference type="GO" id="GO:0045259">
    <property type="term" value="C:proton-transporting ATP synthase complex"/>
    <property type="evidence" value="ECO:0007669"/>
    <property type="project" value="UniProtKB-KW"/>
</dbReference>
<dbReference type="GO" id="GO:0005524">
    <property type="term" value="F:ATP binding"/>
    <property type="evidence" value="ECO:0007669"/>
    <property type="project" value="UniProtKB-UniRule"/>
</dbReference>
<dbReference type="GO" id="GO:0016887">
    <property type="term" value="F:ATP hydrolysis activity"/>
    <property type="evidence" value="ECO:0007669"/>
    <property type="project" value="InterPro"/>
</dbReference>
<dbReference type="GO" id="GO:0046933">
    <property type="term" value="F:proton-transporting ATP synthase activity, rotational mechanism"/>
    <property type="evidence" value="ECO:0007669"/>
    <property type="project" value="UniProtKB-UniRule"/>
</dbReference>
<dbReference type="CDD" id="cd18110">
    <property type="entry name" value="ATP-synt_F1_beta_C"/>
    <property type="match status" value="1"/>
</dbReference>
<dbReference type="CDD" id="cd18115">
    <property type="entry name" value="ATP-synt_F1_beta_N"/>
    <property type="match status" value="1"/>
</dbReference>
<dbReference type="CDD" id="cd01133">
    <property type="entry name" value="F1-ATPase_beta_CD"/>
    <property type="match status" value="1"/>
</dbReference>
<dbReference type="FunFam" id="1.10.1140.10:FF:000001">
    <property type="entry name" value="ATP synthase subunit beta"/>
    <property type="match status" value="1"/>
</dbReference>
<dbReference type="FunFam" id="2.40.10.170:FF:000005">
    <property type="entry name" value="ATP synthase subunit beta"/>
    <property type="match status" value="1"/>
</dbReference>
<dbReference type="FunFam" id="3.40.50.300:FF:000004">
    <property type="entry name" value="ATP synthase subunit beta"/>
    <property type="match status" value="1"/>
</dbReference>
<dbReference type="Gene3D" id="2.40.10.170">
    <property type="match status" value="1"/>
</dbReference>
<dbReference type="Gene3D" id="1.10.1140.10">
    <property type="entry name" value="Bovine Mitochondrial F1-atpase, Atp Synthase Beta Chain, Chain D, domain 3"/>
    <property type="match status" value="1"/>
</dbReference>
<dbReference type="Gene3D" id="3.40.50.300">
    <property type="entry name" value="P-loop containing nucleotide triphosphate hydrolases"/>
    <property type="match status" value="1"/>
</dbReference>
<dbReference type="HAMAP" id="MF_01347">
    <property type="entry name" value="ATP_synth_beta_bact"/>
    <property type="match status" value="1"/>
</dbReference>
<dbReference type="InterPro" id="IPR003593">
    <property type="entry name" value="AAA+_ATPase"/>
</dbReference>
<dbReference type="InterPro" id="IPR055190">
    <property type="entry name" value="ATP-synt_VA_C"/>
</dbReference>
<dbReference type="InterPro" id="IPR005722">
    <property type="entry name" value="ATP_synth_F1_bsu"/>
</dbReference>
<dbReference type="InterPro" id="IPR020003">
    <property type="entry name" value="ATPase_a/bsu_AS"/>
</dbReference>
<dbReference type="InterPro" id="IPR050053">
    <property type="entry name" value="ATPase_alpha/beta_chains"/>
</dbReference>
<dbReference type="InterPro" id="IPR004100">
    <property type="entry name" value="ATPase_F1/V1/A1_a/bsu_N"/>
</dbReference>
<dbReference type="InterPro" id="IPR036121">
    <property type="entry name" value="ATPase_F1/V1/A1_a/bsu_N_sf"/>
</dbReference>
<dbReference type="InterPro" id="IPR000194">
    <property type="entry name" value="ATPase_F1/V1/A1_a/bsu_nucl-bd"/>
</dbReference>
<dbReference type="InterPro" id="IPR024034">
    <property type="entry name" value="ATPase_F1/V1_b/a_C"/>
</dbReference>
<dbReference type="InterPro" id="IPR027417">
    <property type="entry name" value="P-loop_NTPase"/>
</dbReference>
<dbReference type="NCBIfam" id="TIGR01039">
    <property type="entry name" value="atpD"/>
    <property type="match status" value="1"/>
</dbReference>
<dbReference type="PANTHER" id="PTHR15184">
    <property type="entry name" value="ATP SYNTHASE"/>
    <property type="match status" value="1"/>
</dbReference>
<dbReference type="PANTHER" id="PTHR15184:SF71">
    <property type="entry name" value="ATP SYNTHASE SUBUNIT BETA, MITOCHONDRIAL"/>
    <property type="match status" value="1"/>
</dbReference>
<dbReference type="Pfam" id="PF00006">
    <property type="entry name" value="ATP-synt_ab"/>
    <property type="match status" value="1"/>
</dbReference>
<dbReference type="Pfam" id="PF02874">
    <property type="entry name" value="ATP-synt_ab_N"/>
    <property type="match status" value="1"/>
</dbReference>
<dbReference type="Pfam" id="PF22919">
    <property type="entry name" value="ATP-synt_VA_C"/>
    <property type="match status" value="1"/>
</dbReference>
<dbReference type="SMART" id="SM00382">
    <property type="entry name" value="AAA"/>
    <property type="match status" value="1"/>
</dbReference>
<dbReference type="SUPFAM" id="SSF47917">
    <property type="entry name" value="C-terminal domain of alpha and beta subunits of F1 ATP synthase"/>
    <property type="match status" value="1"/>
</dbReference>
<dbReference type="SUPFAM" id="SSF50615">
    <property type="entry name" value="N-terminal domain of alpha and beta subunits of F1 ATP synthase"/>
    <property type="match status" value="1"/>
</dbReference>
<dbReference type="SUPFAM" id="SSF52540">
    <property type="entry name" value="P-loop containing nucleoside triphosphate hydrolases"/>
    <property type="match status" value="1"/>
</dbReference>
<dbReference type="PROSITE" id="PS00152">
    <property type="entry name" value="ATPASE_ALPHA_BETA"/>
    <property type="match status" value="1"/>
</dbReference>
<organism>
    <name type="scientific">Lactiplantibacillus plantarum (strain ATCC BAA-793 / NCIMB 8826 / WCFS1)</name>
    <name type="common">Lactobacillus plantarum</name>
    <dbReference type="NCBI Taxonomy" id="220668"/>
    <lineage>
        <taxon>Bacteria</taxon>
        <taxon>Bacillati</taxon>
        <taxon>Bacillota</taxon>
        <taxon>Bacilli</taxon>
        <taxon>Lactobacillales</taxon>
        <taxon>Lactobacillaceae</taxon>
        <taxon>Lactiplantibacillus</taxon>
    </lineage>
</organism>
<proteinExistence type="inferred from homology"/>
<comment type="function">
    <text evidence="1">Produces ATP from ADP in the presence of a proton gradient across the membrane. The catalytic sites are hosted primarily by the beta subunits.</text>
</comment>
<comment type="catalytic activity">
    <reaction evidence="1">
        <text>ATP + H2O + 4 H(+)(in) = ADP + phosphate + 5 H(+)(out)</text>
        <dbReference type="Rhea" id="RHEA:57720"/>
        <dbReference type="ChEBI" id="CHEBI:15377"/>
        <dbReference type="ChEBI" id="CHEBI:15378"/>
        <dbReference type="ChEBI" id="CHEBI:30616"/>
        <dbReference type="ChEBI" id="CHEBI:43474"/>
        <dbReference type="ChEBI" id="CHEBI:456216"/>
        <dbReference type="EC" id="7.1.2.2"/>
    </reaction>
</comment>
<comment type="subunit">
    <text evidence="1">F-type ATPases have 2 components, CF(1) - the catalytic core - and CF(0) - the membrane proton channel. CF(1) has five subunits: alpha(3), beta(3), gamma(1), delta(1), epsilon(1). CF(0) has three main subunits: a(1), b(2) and c(9-12). The alpha and beta chains form an alternating ring which encloses part of the gamma chain. CF(1) is attached to CF(0) by a central stalk formed by the gamma and epsilon chains, while a peripheral stalk is formed by the delta and b chains.</text>
</comment>
<comment type="subcellular location">
    <subcellularLocation>
        <location evidence="1">Cell membrane</location>
        <topology evidence="1">Peripheral membrane protein</topology>
    </subcellularLocation>
</comment>
<comment type="similarity">
    <text evidence="1">Belongs to the ATPase alpha/beta chains family.</text>
</comment>
<sequence length="467" mass="50831">MSTGKVVQVIGPVVDVEFSLNDKLPDINNALIIQKDNDDTLTVEVSLELGDGVVRTVAMDGTDGLRRGMTVEDTGSSITVPVGKETLGRVFNVLGETIDGGPEFGPDAERNPIHRDAPKYDELTTSTEVLETGIKVIDLLAPYVRGGKIGLFGGAGVGKTVLIQELIHNIAQEHNGISVFTGVGERTREGNDLYFEMKASGVLKNTAMVYGQMNEPPGARMRVALTGLTIAEYFRDVQGQDVLLFIDNIFRFTQAGSEVSALLGRIPSAVGYQPTLATEMGQLQERITSTKKGSVTSIQAVYVPADDYTDPAPATTFAHLDATTNLERSLTEQGIYPAVDPLASSSIALDPSIVGEEHYQVATEVQRVLQRYRELQDIISILGMDELSDEEKTTVARARRIQFFLSQNFFVAENFTGQPGSYVPINDTIKGFKEILEGKYDDLPEDAFRQVGKIDDVVEKAKSMVTD</sequence>